<gene>
    <name type="primary">COPG1</name>
    <name type="synonym">COPG</name>
</gene>
<sequence length="874" mass="97718">MLKKFDKKDEESGGGSNPFQHLEKSAVLQEARVFNETPINPRKCAHILTKILYLINQGEHLGTTEATEAFFAMTKLFQSNDPTLRRMCYLTIKEMSCIAEDVIIVTSSLTKDMTGKEDNYRGPAVRALCQITDSTMLQAIERYMKQAIVDKVPSVSSSALVSSLHLLKCSFDVVKRWVNEAQEAASSDNIMVQYHALGLLYHVRKNDRLAVNKMISKVTRHGLKSPFAYCMMIRVASKQLEEEDGSRDSPLFDFIESCLRNKHEMVVYEAASAIVNLPGCSAKELAPAVSVLQLFCSSPKAALRYAAVRTLNKVAMKHPSAVTACNLDLENLVTDSNRSIATLAITTLLKTGSESSIDRLMKQISSFMSEISDEFKVVVVQAISALCQKYPRKHAVLMNFLFTMLREEGGFEYKRAIVDCIISIIEENSESKETGLSHLCEFIEDCEFTVLATRILHLLGQEGPKTTNPSKYIRFIYNRVVLEHEEVRAGAVSALAKFGAQNEEMLPSILVLLKRCVMDDDNEVRDRATFYLNVLEQKQKALNAGYILNGLTVSIPGLERALQQYTLEPSEKPFDLKSVPLATAPMAEQRTESTPITAVKQPEKVAATRQEIFQEQLAAVPEFRGLGPLFKSSPEPVALTESETEYVIRCTKHTFTNHMVFQFDCTNTLNDQTLENVTVQMEPTEAYEVLCYVPARSLPYNQPGTCYTLVALPKEDPTAVACTFSCMMKFTVKDCDPTTGETDDEGYEDEYVLEDLEVTVADHIQKVMKLNFEAAWDEVGDEFEKEETFTLSTIKTLEEAVGNIVKFLGMHPCERSDKVPDNKNTHTLLLAGVFRGGHDILVRSRLLLLDTVTMQVTARSLEELPVDIILASVG</sequence>
<name>COPG1_HUMAN</name>
<dbReference type="EMBL" id="AB047846">
    <property type="protein sequence ID" value="BAB17657.1"/>
    <property type="molecule type" value="mRNA"/>
</dbReference>
<dbReference type="EMBL" id="AF100756">
    <property type="protein sequence ID" value="AAD43020.1"/>
    <property type="molecule type" value="mRNA"/>
</dbReference>
<dbReference type="EMBL" id="AK001724">
    <property type="protein sequence ID" value="BAG50968.1"/>
    <property type="molecule type" value="mRNA"/>
</dbReference>
<dbReference type="EMBL" id="AK291693">
    <property type="protein sequence ID" value="BAF84382.1"/>
    <property type="molecule type" value="mRNA"/>
</dbReference>
<dbReference type="EMBL" id="CH471052">
    <property type="protein sequence ID" value="EAW79267.1"/>
    <property type="molecule type" value="Genomic_DNA"/>
</dbReference>
<dbReference type="EMBL" id="BC066650">
    <property type="protein sequence ID" value="AAH66650.1"/>
    <property type="molecule type" value="mRNA"/>
</dbReference>
<dbReference type="CCDS" id="CCDS33851.1"/>
<dbReference type="RefSeq" id="NP_057212.1">
    <property type="nucleotide sequence ID" value="NM_016128.4"/>
</dbReference>
<dbReference type="PDB" id="1R4X">
    <property type="method" value="X-ray"/>
    <property type="resolution" value="1.90 A"/>
    <property type="chains" value="A=608-874"/>
</dbReference>
<dbReference type="PDBsum" id="1R4X"/>
<dbReference type="SMR" id="Q9Y678"/>
<dbReference type="BioGRID" id="116496">
    <property type="interactions" value="246"/>
</dbReference>
<dbReference type="ComplexPortal" id="CPX-7803">
    <property type="entry name" value="COPI vesicle coat complex, COPG1-COPZ1 variant"/>
</dbReference>
<dbReference type="ComplexPortal" id="CPX-7970">
    <property type="entry name" value="COPI vesicle coat complex, COPG1-COPZ2 variant"/>
</dbReference>
<dbReference type="CORUM" id="Q9Y678"/>
<dbReference type="DIP" id="DIP-29872N"/>
<dbReference type="FunCoup" id="Q9Y678">
    <property type="interactions" value="3270"/>
</dbReference>
<dbReference type="IntAct" id="Q9Y678">
    <property type="interactions" value="108"/>
</dbReference>
<dbReference type="MINT" id="Q9Y678"/>
<dbReference type="STRING" id="9606.ENSP00000325002"/>
<dbReference type="DrugBank" id="DB03963">
    <property type="generic name" value="S-(Dimethylarsenic)Cysteine"/>
</dbReference>
<dbReference type="GlyCosmos" id="Q9Y678">
    <property type="glycosylation" value="1 site, 1 glycan"/>
</dbReference>
<dbReference type="GlyGen" id="Q9Y678">
    <property type="glycosylation" value="6 sites, 1 O-linked glycan (6 sites)"/>
</dbReference>
<dbReference type="iPTMnet" id="Q9Y678"/>
<dbReference type="MetOSite" id="Q9Y678"/>
<dbReference type="PhosphoSitePlus" id="Q9Y678"/>
<dbReference type="SwissPalm" id="Q9Y678"/>
<dbReference type="BioMuta" id="COPG1"/>
<dbReference type="DMDM" id="12229771"/>
<dbReference type="jPOST" id="Q9Y678"/>
<dbReference type="MassIVE" id="Q9Y678"/>
<dbReference type="PaxDb" id="9606-ENSP00000325002"/>
<dbReference type="PeptideAtlas" id="Q9Y678"/>
<dbReference type="ProteomicsDB" id="86615"/>
<dbReference type="Pumba" id="Q9Y678"/>
<dbReference type="Antibodypedia" id="46660">
    <property type="antibodies" value="143 antibodies from 26 providers"/>
</dbReference>
<dbReference type="DNASU" id="22820"/>
<dbReference type="Ensembl" id="ENST00000314797.10">
    <property type="protein sequence ID" value="ENSP00000325002.6"/>
    <property type="gene ID" value="ENSG00000181789.14"/>
</dbReference>
<dbReference type="GeneID" id="22820"/>
<dbReference type="KEGG" id="hsa:22820"/>
<dbReference type="MANE-Select" id="ENST00000314797.10">
    <property type="protein sequence ID" value="ENSP00000325002.6"/>
    <property type="RefSeq nucleotide sequence ID" value="NM_016128.4"/>
    <property type="RefSeq protein sequence ID" value="NP_057212.1"/>
</dbReference>
<dbReference type="UCSC" id="uc003els.4">
    <property type="organism name" value="human"/>
</dbReference>
<dbReference type="AGR" id="HGNC:2236"/>
<dbReference type="CTD" id="22820"/>
<dbReference type="DisGeNET" id="22820"/>
<dbReference type="GeneCards" id="COPG1"/>
<dbReference type="HGNC" id="HGNC:2236">
    <property type="gene designation" value="COPG1"/>
</dbReference>
<dbReference type="HPA" id="ENSG00000181789">
    <property type="expression patterns" value="Low tissue specificity"/>
</dbReference>
<dbReference type="MalaCards" id="COPG1"/>
<dbReference type="MIM" id="615525">
    <property type="type" value="gene"/>
</dbReference>
<dbReference type="MIM" id="620983">
    <property type="type" value="phenotype"/>
</dbReference>
<dbReference type="neXtProt" id="NX_Q9Y678"/>
<dbReference type="OpenTargets" id="ENSG00000181789"/>
<dbReference type="PharmGKB" id="PA26752"/>
<dbReference type="VEuPathDB" id="HostDB:ENSG00000181789"/>
<dbReference type="eggNOG" id="KOG1078">
    <property type="taxonomic scope" value="Eukaryota"/>
</dbReference>
<dbReference type="GeneTree" id="ENSGT00390000016313"/>
<dbReference type="HOGENOM" id="CLU_010353_2_0_1"/>
<dbReference type="InParanoid" id="Q9Y678"/>
<dbReference type="OMA" id="RTIVECM"/>
<dbReference type="OrthoDB" id="1074925at2759"/>
<dbReference type="PAN-GO" id="Q9Y678">
    <property type="GO annotations" value="8 GO annotations based on evolutionary models"/>
</dbReference>
<dbReference type="PhylomeDB" id="Q9Y678"/>
<dbReference type="TreeFam" id="TF300324"/>
<dbReference type="PathwayCommons" id="Q9Y678"/>
<dbReference type="Reactome" id="R-HSA-6807878">
    <property type="pathway name" value="COPI-mediated anterograde transport"/>
</dbReference>
<dbReference type="Reactome" id="R-HSA-6811434">
    <property type="pathway name" value="COPI-dependent Golgi-to-ER retrograde traffic"/>
</dbReference>
<dbReference type="SignaLink" id="Q9Y678"/>
<dbReference type="BioGRID-ORCS" id="22820">
    <property type="hits" value="674 hits in 1165 CRISPR screens"/>
</dbReference>
<dbReference type="CD-CODE" id="FB4E32DD">
    <property type="entry name" value="Presynaptic clusters and postsynaptic densities"/>
</dbReference>
<dbReference type="ChiTaRS" id="COPG1">
    <property type="organism name" value="human"/>
</dbReference>
<dbReference type="EvolutionaryTrace" id="Q9Y678"/>
<dbReference type="GeneWiki" id="COPG"/>
<dbReference type="GenomeRNAi" id="22820"/>
<dbReference type="Pharos" id="Q9Y678">
    <property type="development level" value="Tbio"/>
</dbReference>
<dbReference type="PRO" id="PR:Q9Y678"/>
<dbReference type="Proteomes" id="UP000005640">
    <property type="component" value="Chromosome 3"/>
</dbReference>
<dbReference type="RNAct" id="Q9Y678">
    <property type="molecule type" value="protein"/>
</dbReference>
<dbReference type="Bgee" id="ENSG00000181789">
    <property type="expression patterns" value="Expressed in stromal cell of endometrium and 196 other cell types or tissues"/>
</dbReference>
<dbReference type="ExpressionAtlas" id="Q9Y678">
    <property type="expression patterns" value="baseline and differential"/>
</dbReference>
<dbReference type="GO" id="GO:0030126">
    <property type="term" value="C:COPI vesicle coat"/>
    <property type="evidence" value="ECO:0000250"/>
    <property type="project" value="UniProtKB"/>
</dbReference>
<dbReference type="GO" id="GO:0005829">
    <property type="term" value="C:cytosol"/>
    <property type="evidence" value="ECO:0000304"/>
    <property type="project" value="Reactome"/>
</dbReference>
<dbReference type="GO" id="GO:0005783">
    <property type="term" value="C:endoplasmic reticulum"/>
    <property type="evidence" value="ECO:0000318"/>
    <property type="project" value="GO_Central"/>
</dbReference>
<dbReference type="GO" id="GO:0005789">
    <property type="term" value="C:endoplasmic reticulum membrane"/>
    <property type="evidence" value="ECO:0000304"/>
    <property type="project" value="Reactome"/>
</dbReference>
<dbReference type="GO" id="GO:0005793">
    <property type="term" value="C:endoplasmic reticulum-Golgi intermediate compartment"/>
    <property type="evidence" value="ECO:0000318"/>
    <property type="project" value="GO_Central"/>
</dbReference>
<dbReference type="GO" id="GO:0005794">
    <property type="term" value="C:Golgi apparatus"/>
    <property type="evidence" value="ECO:0000314"/>
    <property type="project" value="HPA"/>
</dbReference>
<dbReference type="GO" id="GO:0000139">
    <property type="term" value="C:Golgi membrane"/>
    <property type="evidence" value="ECO:0000250"/>
    <property type="project" value="BHF-UCL"/>
</dbReference>
<dbReference type="GO" id="GO:0030133">
    <property type="term" value="C:transport vesicle"/>
    <property type="evidence" value="ECO:0000304"/>
    <property type="project" value="Reactome"/>
</dbReference>
<dbReference type="GO" id="GO:0005198">
    <property type="term" value="F:structural molecule activity"/>
    <property type="evidence" value="ECO:0007669"/>
    <property type="project" value="InterPro"/>
</dbReference>
<dbReference type="GO" id="GO:0006888">
    <property type="term" value="P:endoplasmic reticulum to Golgi vesicle-mediated transport"/>
    <property type="evidence" value="ECO:0000318"/>
    <property type="project" value="GO_Central"/>
</dbReference>
<dbReference type="GO" id="GO:0051683">
    <property type="term" value="P:establishment of Golgi localization"/>
    <property type="evidence" value="ECO:0000250"/>
    <property type="project" value="BHF-UCL"/>
</dbReference>
<dbReference type="GO" id="GO:0006891">
    <property type="term" value="P:intra-Golgi vesicle-mediated transport"/>
    <property type="evidence" value="ECO:0000318"/>
    <property type="project" value="GO_Central"/>
</dbReference>
<dbReference type="GO" id="GO:0006886">
    <property type="term" value="P:intracellular protein transport"/>
    <property type="evidence" value="ECO:0007669"/>
    <property type="project" value="InterPro"/>
</dbReference>
<dbReference type="GO" id="GO:0072384">
    <property type="term" value="P:organelle transport along microtubule"/>
    <property type="evidence" value="ECO:0000250"/>
    <property type="project" value="BHF-UCL"/>
</dbReference>
<dbReference type="GO" id="GO:0009306">
    <property type="term" value="P:protein secretion"/>
    <property type="evidence" value="ECO:0000318"/>
    <property type="project" value="GO_Central"/>
</dbReference>
<dbReference type="FunFam" id="1.25.10.10:FF:000038">
    <property type="entry name" value="Coatomer subunit gamma"/>
    <property type="match status" value="1"/>
</dbReference>
<dbReference type="FunFam" id="2.60.40.1480:FF:000001">
    <property type="entry name" value="Coatomer subunit gamma"/>
    <property type="match status" value="1"/>
</dbReference>
<dbReference type="FunFam" id="3.30.310.10:FF:000006">
    <property type="entry name" value="Coatomer subunit gamma"/>
    <property type="match status" value="1"/>
</dbReference>
<dbReference type="FunFam" id="1.25.10.10:FF:001568">
    <property type="entry name" value="Uncharacterized protein"/>
    <property type="match status" value="1"/>
</dbReference>
<dbReference type="Gene3D" id="2.60.40.1480">
    <property type="entry name" value="Coatomer, gamma subunit, appendage domain"/>
    <property type="match status" value="1"/>
</dbReference>
<dbReference type="Gene3D" id="1.25.10.10">
    <property type="entry name" value="Leucine-rich Repeat Variant"/>
    <property type="match status" value="2"/>
</dbReference>
<dbReference type="Gene3D" id="3.30.310.10">
    <property type="entry name" value="TATA-Binding Protein"/>
    <property type="match status" value="1"/>
</dbReference>
<dbReference type="InterPro" id="IPR011989">
    <property type="entry name" value="ARM-like"/>
</dbReference>
<dbReference type="InterPro" id="IPR016024">
    <property type="entry name" value="ARM-type_fold"/>
</dbReference>
<dbReference type="InterPro" id="IPR002553">
    <property type="entry name" value="Clathrin/coatomer_adapt-like_N"/>
</dbReference>
<dbReference type="InterPro" id="IPR013041">
    <property type="entry name" value="Clathrin_app_Ig-like_sf"/>
</dbReference>
<dbReference type="InterPro" id="IPR009028">
    <property type="entry name" value="Coatomer/calthrin_app_sub_C"/>
</dbReference>
<dbReference type="InterPro" id="IPR032154">
    <property type="entry name" value="Coatomer_g_Cpla"/>
</dbReference>
<dbReference type="InterPro" id="IPR017106">
    <property type="entry name" value="Coatomer_gsu"/>
</dbReference>
<dbReference type="InterPro" id="IPR013040">
    <property type="entry name" value="Coatomer_gsu_app_Ig-like_dom"/>
</dbReference>
<dbReference type="InterPro" id="IPR037067">
    <property type="entry name" value="Coatomer_gsu_app_sf"/>
</dbReference>
<dbReference type="InterPro" id="IPR012295">
    <property type="entry name" value="TBP_dom_sf"/>
</dbReference>
<dbReference type="PANTHER" id="PTHR10261">
    <property type="entry name" value="COATOMER SUBUNIT GAMMA"/>
    <property type="match status" value="1"/>
</dbReference>
<dbReference type="PANTHER" id="PTHR10261:SF3">
    <property type="entry name" value="COATOMER SUBUNIT GAMMA-1"/>
    <property type="match status" value="1"/>
</dbReference>
<dbReference type="Pfam" id="PF01602">
    <property type="entry name" value="Adaptin_N"/>
    <property type="match status" value="1"/>
</dbReference>
<dbReference type="Pfam" id="PF16381">
    <property type="entry name" value="Coatomer_g_Cpla"/>
    <property type="match status" value="1"/>
</dbReference>
<dbReference type="Pfam" id="PF08752">
    <property type="entry name" value="COP-gamma_platf"/>
    <property type="match status" value="1"/>
</dbReference>
<dbReference type="PIRSF" id="PIRSF037093">
    <property type="entry name" value="Coatomer_gamma_subunit"/>
    <property type="match status" value="1"/>
</dbReference>
<dbReference type="SUPFAM" id="SSF48371">
    <property type="entry name" value="ARM repeat"/>
    <property type="match status" value="1"/>
</dbReference>
<dbReference type="SUPFAM" id="SSF49348">
    <property type="entry name" value="Clathrin adaptor appendage domain"/>
    <property type="match status" value="1"/>
</dbReference>
<dbReference type="SUPFAM" id="SSF55711">
    <property type="entry name" value="Subdomain of clathrin and coatomer appendage domain"/>
    <property type="match status" value="1"/>
</dbReference>
<keyword id="KW-0002">3D-structure</keyword>
<keyword id="KW-0963">Cytoplasm</keyword>
<keyword id="KW-0968">Cytoplasmic vesicle</keyword>
<keyword id="KW-0225">Disease variant</keyword>
<keyword id="KW-0931">ER-Golgi transport</keyword>
<keyword id="KW-0333">Golgi apparatus</keyword>
<keyword id="KW-0472">Membrane</keyword>
<keyword id="KW-0597">Phosphoprotein</keyword>
<keyword id="KW-0653">Protein transport</keyword>
<keyword id="KW-1267">Proteomics identification</keyword>
<keyword id="KW-1185">Reference proteome</keyword>
<keyword id="KW-0677">Repeat</keyword>
<keyword id="KW-0813">Transport</keyword>
<feature type="chain" id="PRO_0000193858" description="Coatomer subunit gamma-1">
    <location>
        <begin position="1"/>
        <end position="874"/>
    </location>
</feature>
<feature type="repeat" description="HEAT 1">
    <location>
        <begin position="64"/>
        <end position="101"/>
    </location>
</feature>
<feature type="repeat" description="HEAT 2">
    <location>
        <begin position="283"/>
        <end position="320"/>
    </location>
</feature>
<feature type="repeat" description="HEAT 3">
    <location>
        <begin position="322"/>
        <end position="355"/>
    </location>
</feature>
<feature type="repeat" description="HEAT 4">
    <location>
        <begin position="356"/>
        <end position="392"/>
    </location>
</feature>
<feature type="region of interest" description="Disordered" evidence="2">
    <location>
        <begin position="1"/>
        <end position="21"/>
    </location>
</feature>
<feature type="region of interest" description="Interaction with ZNF289/ARFGAP2" evidence="4">
    <location>
        <begin position="609"/>
        <end position="874"/>
    </location>
</feature>
<feature type="compositionally biased region" description="Basic and acidic residues" evidence="2">
    <location>
        <begin position="1"/>
        <end position="11"/>
    </location>
</feature>
<feature type="modified residue" description="Phosphothreonine" evidence="8">
    <location>
        <position position="594"/>
    </location>
</feature>
<feature type="sequence variant" id="VAR_090087" description="In IMD128; likely pathogenic; decreased retrograde Golgi-to-ER protein transport." evidence="6">
    <original>K</original>
    <variation>E</variation>
    <location>
        <position position="652"/>
    </location>
</feature>
<feature type="sequence variant" id="VAR_054039" description="In dbSNP:rs15648.">
    <original>M</original>
    <variation>T</variation>
    <location>
        <position position="681"/>
    </location>
</feature>
<feature type="mutagenesis site" description="Loss of interaction with ZNF289/ARFGAP2." evidence="4">
    <original>W</original>
    <variation>S</variation>
    <location>
        <position position="776"/>
    </location>
</feature>
<feature type="sequence conflict" description="In Ref. 3; BAG50968." evidence="7" ref="3">
    <original>E</original>
    <variation>V</variation>
    <location>
        <position position="622"/>
    </location>
</feature>
<feature type="sequence conflict" description="In Ref. 3; BAG50968." evidence="7" ref="3">
    <original>E</original>
    <variation>G</variation>
    <location>
        <position position="786"/>
    </location>
</feature>
<feature type="sequence conflict" description="In Ref. 3; BAG50968." evidence="7" ref="3">
    <original>V</original>
    <variation>M</variation>
    <location>
        <position position="842"/>
    </location>
</feature>
<feature type="sequence conflict" description="In Ref. 3; BAF84382/BAG50968." evidence="7" ref="3">
    <original>M</original>
    <variation>T</variation>
    <location>
        <position position="854"/>
    </location>
</feature>
<feature type="helix" evidence="9">
    <location>
        <begin position="609"/>
        <end position="618"/>
    </location>
</feature>
<feature type="helix" evidence="9">
    <location>
        <begin position="621"/>
        <end position="623"/>
    </location>
</feature>
<feature type="strand" evidence="9">
    <location>
        <begin position="644"/>
        <end position="654"/>
    </location>
</feature>
<feature type="strand" evidence="9">
    <location>
        <begin position="656"/>
        <end position="667"/>
    </location>
</feature>
<feature type="strand" evidence="9">
    <location>
        <begin position="672"/>
        <end position="686"/>
    </location>
</feature>
<feature type="strand" evidence="9">
    <location>
        <begin position="688"/>
        <end position="693"/>
    </location>
</feature>
<feature type="strand" evidence="9">
    <location>
        <begin position="695"/>
        <end position="698"/>
    </location>
</feature>
<feature type="strand" evidence="9">
    <location>
        <begin position="704"/>
        <end position="711"/>
    </location>
</feature>
<feature type="strand" evidence="9">
    <location>
        <begin position="714"/>
        <end position="716"/>
    </location>
</feature>
<feature type="strand" evidence="9">
    <location>
        <begin position="722"/>
        <end position="735"/>
    </location>
</feature>
<feature type="turn" evidence="9">
    <location>
        <begin position="737"/>
        <end position="739"/>
    </location>
</feature>
<feature type="strand" evidence="9">
    <location>
        <begin position="747"/>
        <end position="752"/>
    </location>
</feature>
<feature type="strand" evidence="9">
    <location>
        <begin position="756"/>
        <end position="758"/>
    </location>
</feature>
<feature type="helix" evidence="9">
    <location>
        <begin position="760"/>
        <end position="763"/>
    </location>
</feature>
<feature type="strand" evidence="9">
    <location>
        <begin position="764"/>
        <end position="766"/>
    </location>
</feature>
<feature type="helix" evidence="9">
    <location>
        <begin position="772"/>
        <end position="779"/>
    </location>
</feature>
<feature type="strand" evidence="9">
    <location>
        <begin position="785"/>
        <end position="791"/>
    </location>
</feature>
<feature type="helix" evidence="9">
    <location>
        <begin position="797"/>
        <end position="808"/>
    </location>
</feature>
<feature type="turn" evidence="9">
    <location>
        <begin position="814"/>
        <end position="817"/>
    </location>
</feature>
<feature type="strand" evidence="9">
    <location>
        <begin position="824"/>
        <end position="834"/>
    </location>
</feature>
<feature type="turn" evidence="9">
    <location>
        <begin position="835"/>
        <end position="837"/>
    </location>
</feature>
<feature type="strand" evidence="9">
    <location>
        <begin position="838"/>
        <end position="862"/>
    </location>
</feature>
<feature type="helix" evidence="9">
    <location>
        <begin position="863"/>
        <end position="872"/>
    </location>
</feature>
<organism>
    <name type="scientific">Homo sapiens</name>
    <name type="common">Human</name>
    <dbReference type="NCBI Taxonomy" id="9606"/>
    <lineage>
        <taxon>Eukaryota</taxon>
        <taxon>Metazoa</taxon>
        <taxon>Chordata</taxon>
        <taxon>Craniata</taxon>
        <taxon>Vertebrata</taxon>
        <taxon>Euteleostomi</taxon>
        <taxon>Mammalia</taxon>
        <taxon>Eutheria</taxon>
        <taxon>Euarchontoglires</taxon>
        <taxon>Primates</taxon>
        <taxon>Haplorrhini</taxon>
        <taxon>Catarrhini</taxon>
        <taxon>Hominidae</taxon>
        <taxon>Homo</taxon>
    </lineage>
</organism>
<proteinExistence type="evidence at protein level"/>
<accession>Q9Y678</accession>
<accession>A8K6M8</accession>
<accession>B3KMF6</accession>
<accession>Q54AC4</accession>
<reference key="1">
    <citation type="journal article" date="2000" name="J. Biochem.">
        <title>Identification and characterization of novel isoforms of COP I subunits.</title>
        <authorList>
            <person name="Futatsumori M."/>
            <person name="Kasai K."/>
            <person name="Takatsu H."/>
            <person name="Shin H.-W."/>
            <person name="Nakayama K."/>
        </authorList>
    </citation>
    <scope>NUCLEOTIDE SEQUENCE [MRNA]</scope>
    <scope>INTERACTION WITH COPB1 AND TMED10</scope>
    <scope>SUBCELLULAR LOCATION</scope>
</reference>
<reference key="2">
    <citation type="journal article" date="2000" name="Proc. Natl. Acad. Sci. U.S.A.">
        <title>Gene expression profiling in the human hypothalamus-pituitary-adrenal axis and full-length cDNA cloning.</title>
        <authorList>
            <person name="Hu R.-M."/>
            <person name="Han Z.-G."/>
            <person name="Song H.-D."/>
            <person name="Peng Y.-D."/>
            <person name="Huang Q.-H."/>
            <person name="Ren S.-X."/>
            <person name="Gu Y.-J."/>
            <person name="Huang C.-H."/>
            <person name="Li Y.-B."/>
            <person name="Jiang C.-L."/>
            <person name="Fu G."/>
            <person name="Zhang Q.-H."/>
            <person name="Gu B.-W."/>
            <person name="Dai M."/>
            <person name="Mao Y.-F."/>
            <person name="Gao G.-F."/>
            <person name="Rong R."/>
            <person name="Ye M."/>
            <person name="Zhou J."/>
            <person name="Xu S.-H."/>
            <person name="Gu J."/>
            <person name="Shi J.-X."/>
            <person name="Jin W.-R."/>
            <person name="Zhang C.-K."/>
            <person name="Wu T.-M."/>
            <person name="Huang G.-Y."/>
            <person name="Chen Z."/>
            <person name="Chen M.-D."/>
            <person name="Chen J.-L."/>
        </authorList>
    </citation>
    <scope>NUCLEOTIDE SEQUENCE [LARGE SCALE MRNA]</scope>
    <source>
        <tissue>Pituitary</tissue>
    </source>
</reference>
<reference key="3">
    <citation type="journal article" date="2004" name="Nat. Genet.">
        <title>Complete sequencing and characterization of 21,243 full-length human cDNAs.</title>
        <authorList>
            <person name="Ota T."/>
            <person name="Suzuki Y."/>
            <person name="Nishikawa T."/>
            <person name="Otsuki T."/>
            <person name="Sugiyama T."/>
            <person name="Irie R."/>
            <person name="Wakamatsu A."/>
            <person name="Hayashi K."/>
            <person name="Sato H."/>
            <person name="Nagai K."/>
            <person name="Kimura K."/>
            <person name="Makita H."/>
            <person name="Sekine M."/>
            <person name="Obayashi M."/>
            <person name="Nishi T."/>
            <person name="Shibahara T."/>
            <person name="Tanaka T."/>
            <person name="Ishii S."/>
            <person name="Yamamoto J."/>
            <person name="Saito K."/>
            <person name="Kawai Y."/>
            <person name="Isono Y."/>
            <person name="Nakamura Y."/>
            <person name="Nagahari K."/>
            <person name="Murakami K."/>
            <person name="Yasuda T."/>
            <person name="Iwayanagi T."/>
            <person name="Wagatsuma M."/>
            <person name="Shiratori A."/>
            <person name="Sudo H."/>
            <person name="Hosoiri T."/>
            <person name="Kaku Y."/>
            <person name="Kodaira H."/>
            <person name="Kondo H."/>
            <person name="Sugawara M."/>
            <person name="Takahashi M."/>
            <person name="Kanda K."/>
            <person name="Yokoi T."/>
            <person name="Furuya T."/>
            <person name="Kikkawa E."/>
            <person name="Omura Y."/>
            <person name="Abe K."/>
            <person name="Kamihara K."/>
            <person name="Katsuta N."/>
            <person name="Sato K."/>
            <person name="Tanikawa M."/>
            <person name="Yamazaki M."/>
            <person name="Ninomiya K."/>
            <person name="Ishibashi T."/>
            <person name="Yamashita H."/>
            <person name="Murakawa K."/>
            <person name="Fujimori K."/>
            <person name="Tanai H."/>
            <person name="Kimata M."/>
            <person name="Watanabe M."/>
            <person name="Hiraoka S."/>
            <person name="Chiba Y."/>
            <person name="Ishida S."/>
            <person name="Ono Y."/>
            <person name="Takiguchi S."/>
            <person name="Watanabe S."/>
            <person name="Yosida M."/>
            <person name="Hotuta T."/>
            <person name="Kusano J."/>
            <person name="Kanehori K."/>
            <person name="Takahashi-Fujii A."/>
            <person name="Hara H."/>
            <person name="Tanase T.-O."/>
            <person name="Nomura Y."/>
            <person name="Togiya S."/>
            <person name="Komai F."/>
            <person name="Hara R."/>
            <person name="Takeuchi K."/>
            <person name="Arita M."/>
            <person name="Imose N."/>
            <person name="Musashino K."/>
            <person name="Yuuki H."/>
            <person name="Oshima A."/>
            <person name="Sasaki N."/>
            <person name="Aotsuka S."/>
            <person name="Yoshikawa Y."/>
            <person name="Matsunawa H."/>
            <person name="Ichihara T."/>
            <person name="Shiohata N."/>
            <person name="Sano S."/>
            <person name="Moriya S."/>
            <person name="Momiyama H."/>
            <person name="Satoh N."/>
            <person name="Takami S."/>
            <person name="Terashima Y."/>
            <person name="Suzuki O."/>
            <person name="Nakagawa S."/>
            <person name="Senoh A."/>
            <person name="Mizoguchi H."/>
            <person name="Goto Y."/>
            <person name="Shimizu F."/>
            <person name="Wakebe H."/>
            <person name="Hishigaki H."/>
            <person name="Watanabe T."/>
            <person name="Sugiyama A."/>
            <person name="Takemoto M."/>
            <person name="Kawakami B."/>
            <person name="Yamazaki M."/>
            <person name="Watanabe K."/>
            <person name="Kumagai A."/>
            <person name="Itakura S."/>
            <person name="Fukuzumi Y."/>
            <person name="Fujimori Y."/>
            <person name="Komiyama M."/>
            <person name="Tashiro H."/>
            <person name="Tanigami A."/>
            <person name="Fujiwara T."/>
            <person name="Ono T."/>
            <person name="Yamada K."/>
            <person name="Fujii Y."/>
            <person name="Ozaki K."/>
            <person name="Hirao M."/>
            <person name="Ohmori Y."/>
            <person name="Kawabata A."/>
            <person name="Hikiji T."/>
            <person name="Kobatake N."/>
            <person name="Inagaki H."/>
            <person name="Ikema Y."/>
            <person name="Okamoto S."/>
            <person name="Okitani R."/>
            <person name="Kawakami T."/>
            <person name="Noguchi S."/>
            <person name="Itoh T."/>
            <person name="Shigeta K."/>
            <person name="Senba T."/>
            <person name="Matsumura K."/>
            <person name="Nakajima Y."/>
            <person name="Mizuno T."/>
            <person name="Morinaga M."/>
            <person name="Sasaki M."/>
            <person name="Togashi T."/>
            <person name="Oyama M."/>
            <person name="Hata H."/>
            <person name="Watanabe M."/>
            <person name="Komatsu T."/>
            <person name="Mizushima-Sugano J."/>
            <person name="Satoh T."/>
            <person name="Shirai Y."/>
            <person name="Takahashi Y."/>
            <person name="Nakagawa K."/>
            <person name="Okumura K."/>
            <person name="Nagase T."/>
            <person name="Nomura N."/>
            <person name="Kikuchi H."/>
            <person name="Masuho Y."/>
            <person name="Yamashita R."/>
            <person name="Nakai K."/>
            <person name="Yada T."/>
            <person name="Nakamura Y."/>
            <person name="Ohara O."/>
            <person name="Isogai T."/>
            <person name="Sugano S."/>
        </authorList>
    </citation>
    <scope>NUCLEOTIDE SEQUENCE [LARGE SCALE MRNA]</scope>
    <source>
        <tissue>Placenta</tissue>
        <tissue>Teratocarcinoma</tissue>
    </source>
</reference>
<reference key="4">
    <citation type="submission" date="2005-09" db="EMBL/GenBank/DDBJ databases">
        <authorList>
            <person name="Mural R.J."/>
            <person name="Istrail S."/>
            <person name="Sutton G."/>
            <person name="Florea L."/>
            <person name="Halpern A.L."/>
            <person name="Mobarry C.M."/>
            <person name="Lippert R."/>
            <person name="Walenz B."/>
            <person name="Shatkay H."/>
            <person name="Dew I."/>
            <person name="Miller J.R."/>
            <person name="Flanigan M.J."/>
            <person name="Edwards N.J."/>
            <person name="Bolanos R."/>
            <person name="Fasulo D."/>
            <person name="Halldorsson B.V."/>
            <person name="Hannenhalli S."/>
            <person name="Turner R."/>
            <person name="Yooseph S."/>
            <person name="Lu F."/>
            <person name="Nusskern D.R."/>
            <person name="Shue B.C."/>
            <person name="Zheng X.H."/>
            <person name="Zhong F."/>
            <person name="Delcher A.L."/>
            <person name="Huson D.H."/>
            <person name="Kravitz S.A."/>
            <person name="Mouchard L."/>
            <person name="Reinert K."/>
            <person name="Remington K.A."/>
            <person name="Clark A.G."/>
            <person name="Waterman M.S."/>
            <person name="Eichler E.E."/>
            <person name="Adams M.D."/>
            <person name="Hunkapiller M.W."/>
            <person name="Myers E.W."/>
            <person name="Venter J.C."/>
        </authorList>
    </citation>
    <scope>NUCLEOTIDE SEQUENCE [LARGE SCALE GENOMIC DNA]</scope>
</reference>
<reference key="5">
    <citation type="journal article" date="2004" name="Genome Res.">
        <title>The status, quality, and expansion of the NIH full-length cDNA project: the Mammalian Gene Collection (MGC).</title>
        <authorList>
            <consortium name="The MGC Project Team"/>
        </authorList>
    </citation>
    <scope>NUCLEOTIDE SEQUENCE [LARGE SCALE MRNA]</scope>
    <source>
        <tissue>Skin</tissue>
    </source>
</reference>
<reference key="6">
    <citation type="journal article" date="2010" name="Biochem. Biophys. Res. Commun.">
        <title>COPI-mediated retrograde trafficking from the Golgi to the ER regulates EGFR nuclear transport.</title>
        <authorList>
            <person name="Wang Y.N."/>
            <person name="Wang H."/>
            <person name="Yamaguchi H."/>
            <person name="Lee H.J."/>
            <person name="Lee H.H."/>
            <person name="Hung M.C."/>
        </authorList>
    </citation>
    <scope>FUNCTION</scope>
    <scope>INTERACTION WITH EGFR</scope>
</reference>
<reference key="7">
    <citation type="journal article" date="2011" name="BMC Syst. Biol.">
        <title>Initial characterization of the human central proteome.</title>
        <authorList>
            <person name="Burkard T.R."/>
            <person name="Planyavsky M."/>
            <person name="Kaupe I."/>
            <person name="Breitwieser F.P."/>
            <person name="Buerckstuemmer T."/>
            <person name="Bennett K.L."/>
            <person name="Superti-Furga G."/>
            <person name="Colinge J."/>
        </authorList>
    </citation>
    <scope>IDENTIFICATION BY MASS SPECTROMETRY [LARGE SCALE ANALYSIS]</scope>
</reference>
<reference key="8">
    <citation type="journal article" date="2013" name="J. Proteome Res.">
        <title>Toward a comprehensive characterization of a human cancer cell phosphoproteome.</title>
        <authorList>
            <person name="Zhou H."/>
            <person name="Di Palma S."/>
            <person name="Preisinger C."/>
            <person name="Peng M."/>
            <person name="Polat A.N."/>
            <person name="Heck A.J."/>
            <person name="Mohammed S."/>
        </authorList>
    </citation>
    <scope>PHOSPHORYLATION [LARGE SCALE ANALYSIS] AT THR-594</scope>
    <scope>IDENTIFICATION BY MASS SPECTROMETRY [LARGE SCALE ANALYSIS]</scope>
    <source>
        <tissue>Cervix carcinoma</tissue>
        <tissue>Erythroleukemia</tissue>
    </source>
</reference>
<reference key="9">
    <citation type="journal article" date="2014" name="J. Proteomics">
        <title>An enzyme assisted RP-RPLC approach for in-depth analysis of human liver phosphoproteome.</title>
        <authorList>
            <person name="Bian Y."/>
            <person name="Song C."/>
            <person name="Cheng K."/>
            <person name="Dong M."/>
            <person name="Wang F."/>
            <person name="Huang J."/>
            <person name="Sun D."/>
            <person name="Wang L."/>
            <person name="Ye M."/>
            <person name="Zou H."/>
        </authorList>
    </citation>
    <scope>IDENTIFICATION BY MASS SPECTROMETRY [LARGE SCALE ANALYSIS]</scope>
    <source>
        <tissue>Liver</tissue>
    </source>
</reference>
<reference key="10">
    <citation type="journal article" date="2015" name="Proteomics">
        <title>N-terminome analysis of the human mitochondrial proteome.</title>
        <authorList>
            <person name="Vaca Jacome A.S."/>
            <person name="Rabilloud T."/>
            <person name="Schaeffer-Reiss C."/>
            <person name="Rompais M."/>
            <person name="Ayoub D."/>
            <person name="Lane L."/>
            <person name="Bairoch A."/>
            <person name="Van Dorsselaer A."/>
            <person name="Carapito C."/>
        </authorList>
    </citation>
    <scope>IDENTIFICATION BY MASS SPECTROMETRY [LARGE SCALE ANALYSIS]</scope>
</reference>
<reference key="11">
    <citation type="journal article" date="2004" name="Traffic">
        <title>Gamma-COP appendage domain -- structure and function.</title>
        <authorList>
            <person name="Watson P.J."/>
            <person name="Frigerio G."/>
            <person name="Collins B.M."/>
            <person name="Duden R."/>
            <person name="Owen D.J."/>
        </authorList>
    </citation>
    <scope>X-RAY CRYSTALLOGRAPHY (1.9 ANGSTROMS) OF 608-874</scope>
    <scope>INTERACTION WITH ZNF289</scope>
    <scope>MUTAGENESIS OF TRP-776</scope>
</reference>
<reference key="12">
    <citation type="journal article" date="2021" name="J. Clin. Invest.">
        <title>Combined immunodeficiency due to a mutation in the gamma1 subunit of the coat protein I complex.</title>
        <authorList>
            <person name="Bainter W."/>
            <person name="Platt C.D."/>
            <person name="Park S.Y."/>
            <person name="Stafstrom K."/>
            <person name="Wallace J.G."/>
            <person name="Peters Z.T."/>
            <person name="Massaad M.J."/>
            <person name="Becuwe M."/>
            <person name="Salinas S.A."/>
            <person name="Jones J."/>
            <person name="Beaussant-Cohen S."/>
            <person name="Jaber F."/>
            <person name="Yang J.S."/>
            <person name="Walther T.C."/>
            <person name="Orange J.S."/>
            <person name="Rao C."/>
            <person name="Rakoff-Nahoum S."/>
            <person name="Tsokos M."/>
            <person name="Naseem S.U.R."/>
            <person name="Al-Tamemi S."/>
            <person name="Chou J."/>
            <person name="Hsu V.W."/>
            <person name="Geha R.S."/>
        </authorList>
    </citation>
    <scope>VARIANT IMD128 GLU-652</scope>
    <scope>INVOLVEMENT IN IMD128</scope>
    <scope>CHARACTERIZATION OF VARIANT IMD128 GLU-652</scope>
    <scope>SUBUNIT</scope>
</reference>
<evidence type="ECO:0000250" key="1"/>
<evidence type="ECO:0000256" key="2">
    <source>
        <dbReference type="SAM" id="MobiDB-lite"/>
    </source>
</evidence>
<evidence type="ECO:0000269" key="3">
    <source>
    </source>
</evidence>
<evidence type="ECO:0000269" key="4">
    <source>
    </source>
</evidence>
<evidence type="ECO:0000269" key="5">
    <source>
    </source>
</evidence>
<evidence type="ECO:0000269" key="6">
    <source>
    </source>
</evidence>
<evidence type="ECO:0000305" key="7"/>
<evidence type="ECO:0007744" key="8">
    <source>
    </source>
</evidence>
<evidence type="ECO:0007829" key="9">
    <source>
        <dbReference type="PDB" id="1R4X"/>
    </source>
</evidence>
<protein>
    <recommendedName>
        <fullName>Coatomer subunit gamma-1</fullName>
    </recommendedName>
    <alternativeName>
        <fullName>Gamma-1-coat protein</fullName>
        <shortName>Gamma-1-COP</shortName>
    </alternativeName>
</protein>
<comment type="function">
    <text evidence="1 5">The coatomer is a cytosolic protein complex that binds to dilysine motifs and reversibly associates with Golgi non-clathrin-coated vesicles, which further mediate biosynthetic protein transport from the ER, via the Golgi up to the trans Golgi network. Coatomer complex is required for budding from Golgi membranes, and is essential for the retrograde Golgi-to-ER transport of dilysine-tagged proteins. In mammals, the coatomer can only be recruited by membranes associated to ADP-ribosylation factors (ARFs), which are small GTP-binding proteins; the complex also influences the Golgi structural integrity, as well as the processing, activity, and endocytic recycling of LDL receptors. Required for limiting lipid storage in lipid droplets. Involved in lipid homeostasis by regulating the presence of perilipin family members PLIN2 and PLIN3 at the lipid droplet surface and promoting the association of adipocyte triglyceride lipase (PNPLA2) with the lipid droplet surface to mediate lipolysis (By similarity).</text>
</comment>
<comment type="subunit">
    <text evidence="3 4 5 6">Oligomeric complex that consists of at least the alpha, beta, beta', gamma, delta, epsilon and zeta subunits. Interacts with ZNF289/ARFGAP2 through its C-terminal appendage domain. Interacts with EGFR upon EGF treatment; interaction is essential for regulation of EGF-dependent nuclear transport of EGFR by retrograde trafficking from the Golgi to the ER. The coatomer interacts with KDEL receptors; the interaction is important for retrograde trafficking of KDEL-bearing proteins from the Golgi to the endoplasmic reticulum (PubMed:33529166). Interacts with COPB1. Interacts with TMED10 (via C-terminus). Interacts with TMED2, TMED3, TMED7 and TMED9.</text>
</comment>
<comment type="interaction">
    <interactant intactId="EBI-1049127">
        <id>Q9Y678</id>
    </interactant>
    <interactant intactId="EBI-349854">
        <id>P13569</id>
        <label>CFTR</label>
    </interactant>
    <organismsDiffer>false</organismsDiffer>
    <experiments>21</experiments>
</comment>
<comment type="interaction">
    <interactant intactId="EBI-1049127">
        <id>Q9Y678</id>
    </interactant>
    <interactant intactId="EBI-2512429">
        <id>Q96RS6</id>
        <label>NUDCD1</label>
    </interactant>
    <organismsDiffer>false</organismsDiffer>
    <experiments>4</experiments>
</comment>
<comment type="interaction">
    <interactant intactId="EBI-1049127">
        <id>Q9Y678</id>
    </interactant>
    <interactant intactId="EBI-3917235">
        <id>Q9NTJ5</id>
        <label>SACM1L</label>
    </interactant>
    <organismsDiffer>false</organismsDiffer>
    <experiments>6</experiments>
</comment>
<comment type="subcellular location">
    <subcellularLocation>
        <location evidence="3">Cytoplasm</location>
    </subcellularLocation>
    <subcellularLocation>
        <location evidence="3">Golgi apparatus membrane</location>
        <topology evidence="3">Peripheral membrane protein</topology>
        <orientation evidence="3">Cytoplasmic side</orientation>
    </subcellularLocation>
    <subcellularLocation>
        <location evidence="1">Cytoplasmic vesicle</location>
        <location evidence="1">COPI-coated vesicle membrane</location>
        <topology evidence="1">Peripheral membrane protein</topology>
        <orientation evidence="1">Cytoplasmic side</orientation>
    </subcellularLocation>
    <text evidence="1">The coatomer is cytoplasmic or polymerized on the cytoplasmic side of the Golgi, as well as on the vesicles/buds originating from it. Predominantly located in the cis-Golgi apparatus.</text>
</comment>
<comment type="disease" evidence="6">
    <disease id="DI-06958">
        <name>Immunodeficiency 128</name>
        <acronym>IMD128</acronym>
        <description>An autosomal recessive immunologic disorder characterized by persistent bacterial and viral infections manifesting in the first year of life, and defective humoral and cellular immunity. Affected individuals suffer from recurrent respiratory infections, bronchiectasis, and failure to thrive.</description>
        <dbReference type="MIM" id="620983"/>
    </disease>
    <text>The disease may be caused by variants affecting the gene represented in this entry.</text>
</comment>
<comment type="similarity">
    <text evidence="7">Belongs to the COPG family.</text>
</comment>